<evidence type="ECO:0000255" key="1">
    <source>
        <dbReference type="HAMAP-Rule" id="MF_01844"/>
    </source>
</evidence>
<protein>
    <recommendedName>
        <fullName evidence="1">Na(+)/H(+) antiporter NhaA 2</fullName>
    </recommendedName>
    <alternativeName>
        <fullName evidence="1">Sodium/proton antiporter NhaA 2</fullName>
    </alternativeName>
</protein>
<name>NHAA2_VIBVU</name>
<comment type="function">
    <text evidence="1">Na(+)/H(+) antiporter that extrudes sodium in exchange for external protons.</text>
</comment>
<comment type="catalytic activity">
    <reaction evidence="1">
        <text>Na(+)(in) + 2 H(+)(out) = Na(+)(out) + 2 H(+)(in)</text>
        <dbReference type="Rhea" id="RHEA:29251"/>
        <dbReference type="ChEBI" id="CHEBI:15378"/>
        <dbReference type="ChEBI" id="CHEBI:29101"/>
    </reaction>
    <physiologicalReaction direction="left-to-right" evidence="1">
        <dbReference type="Rhea" id="RHEA:29252"/>
    </physiologicalReaction>
</comment>
<comment type="subcellular location">
    <subcellularLocation>
        <location evidence="1">Cell inner membrane</location>
        <topology evidence="1">Multi-pass membrane protein</topology>
    </subcellularLocation>
</comment>
<comment type="similarity">
    <text evidence="1">Belongs to the NhaA Na(+)/H(+) (TC 2.A.33) antiporter family.</text>
</comment>
<gene>
    <name evidence="1" type="primary">nhaA2</name>
    <name type="ordered locus">VV2_0672</name>
</gene>
<organism>
    <name type="scientific">Vibrio vulnificus (strain CMCP6)</name>
    <dbReference type="NCBI Taxonomy" id="216895"/>
    <lineage>
        <taxon>Bacteria</taxon>
        <taxon>Pseudomonadati</taxon>
        <taxon>Pseudomonadota</taxon>
        <taxon>Gammaproteobacteria</taxon>
        <taxon>Vibrionales</taxon>
        <taxon>Vibrionaceae</taxon>
        <taxon>Vibrio</taxon>
    </lineage>
</organism>
<proteinExistence type="inferred from homology"/>
<sequence>MTKRKKRAAINLTRLPIEYIDWLSRPIYRFIHIESAAGIVLFISTLLAVLLANSHLSEEFARFWQISLGMTVGDLVFERSLHKWVNDAGMTLFFFLIALELKRELVLGELRNPQLALLSIAAALGGMSTPPLFYLLLQYGESGQHGWGTVMATDTAFVIGCLALLGRSIPSSLRIFMLSMAVVDDIGAIFVVAIGYGEAVDWLVLSYALLGFMLVRAMAFLGVRSLVLFSIVGGAIWLVIDMSGVHPTITGVILGLLTPTNKWMSRQHLFIIMEALVPSSPSQQWSGDKREGEILKTAAAAARETLSPVERLEMLLHPWVGFVVLPLFALANAGVSLTSVNLTSPITLAVFVGFVFGKPIGIVLFSWIAVWLGIAKLPENLNWGMVFGGGMLAGIGFTMALFISELAYNPDQINAAKLGIFIASITSALIGFLCLRYFAAREKQKRT</sequence>
<accession>Q8D666</accession>
<feature type="chain" id="PRO_0000334462" description="Na(+)/H(+) antiporter NhaA 2">
    <location>
        <begin position="1"/>
        <end position="447"/>
    </location>
</feature>
<feature type="transmembrane region" description="Helical" evidence="1">
    <location>
        <begin position="30"/>
        <end position="50"/>
    </location>
</feature>
<feature type="transmembrane region" description="Helical" evidence="1">
    <location>
        <begin position="81"/>
        <end position="101"/>
    </location>
</feature>
<feature type="transmembrane region" description="Helical" evidence="1">
    <location>
        <begin position="117"/>
        <end position="137"/>
    </location>
</feature>
<feature type="transmembrane region" description="Helical" evidence="1">
    <location>
        <begin position="146"/>
        <end position="166"/>
    </location>
</feature>
<feature type="transmembrane region" description="Helical" evidence="1">
    <location>
        <begin position="175"/>
        <end position="195"/>
    </location>
</feature>
<feature type="transmembrane region" description="Helical" evidence="1">
    <location>
        <begin position="199"/>
        <end position="219"/>
    </location>
</feature>
<feature type="transmembrane region" description="Helical" evidence="1">
    <location>
        <begin position="220"/>
        <end position="240"/>
    </location>
</feature>
<feature type="transmembrane region" description="Helical" evidence="1">
    <location>
        <begin position="315"/>
        <end position="335"/>
    </location>
</feature>
<feature type="transmembrane region" description="Helical" evidence="1">
    <location>
        <begin position="350"/>
        <end position="370"/>
    </location>
</feature>
<feature type="transmembrane region" description="Helical" evidence="1">
    <location>
        <begin position="383"/>
        <end position="403"/>
    </location>
</feature>
<feature type="transmembrane region" description="Helical" evidence="1">
    <location>
        <begin position="415"/>
        <end position="435"/>
    </location>
</feature>
<reference key="1">
    <citation type="submission" date="2002-12" db="EMBL/GenBank/DDBJ databases">
        <title>Complete genome sequence of Vibrio vulnificus CMCP6.</title>
        <authorList>
            <person name="Rhee J.H."/>
            <person name="Kim S.Y."/>
            <person name="Chung S.S."/>
            <person name="Kim J.J."/>
            <person name="Moon Y.H."/>
            <person name="Jeong H."/>
            <person name="Choy H.E."/>
        </authorList>
    </citation>
    <scope>NUCLEOTIDE SEQUENCE [LARGE SCALE GENOMIC DNA]</scope>
    <source>
        <strain>CMCP6</strain>
    </source>
</reference>
<dbReference type="EMBL" id="AE016796">
    <property type="protein sequence ID" value="AAO07613.1"/>
    <property type="molecule type" value="Genomic_DNA"/>
</dbReference>
<dbReference type="RefSeq" id="WP_011081612.1">
    <property type="nucleotide sequence ID" value="NC_004460.2"/>
</dbReference>
<dbReference type="SMR" id="Q8D666"/>
<dbReference type="KEGG" id="vvu:VV2_0672"/>
<dbReference type="HOGENOM" id="CLU_015803_1_2_6"/>
<dbReference type="Proteomes" id="UP000002275">
    <property type="component" value="Chromosome 2"/>
</dbReference>
<dbReference type="GO" id="GO:0005886">
    <property type="term" value="C:plasma membrane"/>
    <property type="evidence" value="ECO:0007669"/>
    <property type="project" value="UniProtKB-SubCell"/>
</dbReference>
<dbReference type="GO" id="GO:0015385">
    <property type="term" value="F:sodium:proton antiporter activity"/>
    <property type="evidence" value="ECO:0007669"/>
    <property type="project" value="TreeGrafter"/>
</dbReference>
<dbReference type="GO" id="GO:0006885">
    <property type="term" value="P:regulation of pH"/>
    <property type="evidence" value="ECO:0007669"/>
    <property type="project" value="InterPro"/>
</dbReference>
<dbReference type="Gene3D" id="1.20.1530.10">
    <property type="entry name" value="Na+/H+ antiporter like domain"/>
    <property type="match status" value="1"/>
</dbReference>
<dbReference type="HAMAP" id="MF_01844">
    <property type="entry name" value="NhaA"/>
    <property type="match status" value="1"/>
</dbReference>
<dbReference type="InterPro" id="IPR023171">
    <property type="entry name" value="Na/H_antiporter_dom_sf"/>
</dbReference>
<dbReference type="InterPro" id="IPR004670">
    <property type="entry name" value="NhaA"/>
</dbReference>
<dbReference type="NCBIfam" id="TIGR00773">
    <property type="entry name" value="NhaA"/>
    <property type="match status" value="1"/>
</dbReference>
<dbReference type="PANTHER" id="PTHR30341:SF0">
    <property type="entry name" value="NA(+)_H(+) ANTIPORTER NHAA"/>
    <property type="match status" value="1"/>
</dbReference>
<dbReference type="PANTHER" id="PTHR30341">
    <property type="entry name" value="SODIUM ION/PROTON ANTIPORTER NHAA-RELATED"/>
    <property type="match status" value="1"/>
</dbReference>
<dbReference type="Pfam" id="PF06965">
    <property type="entry name" value="Na_H_antiport_1"/>
    <property type="match status" value="1"/>
</dbReference>
<keyword id="KW-0050">Antiport</keyword>
<keyword id="KW-0997">Cell inner membrane</keyword>
<keyword id="KW-1003">Cell membrane</keyword>
<keyword id="KW-0406">Ion transport</keyword>
<keyword id="KW-0472">Membrane</keyword>
<keyword id="KW-0915">Sodium</keyword>
<keyword id="KW-0739">Sodium transport</keyword>
<keyword id="KW-0812">Transmembrane</keyword>
<keyword id="KW-1133">Transmembrane helix</keyword>
<keyword id="KW-0813">Transport</keyword>